<feature type="chain" id="PRO_1000188066" description="Small ribosomal subunit biogenesis GTPase RsgA">
    <location>
        <begin position="1"/>
        <end position="350"/>
    </location>
</feature>
<feature type="domain" description="CP-type G" evidence="2">
    <location>
        <begin position="104"/>
        <end position="273"/>
    </location>
</feature>
<feature type="region of interest" description="Disordered" evidence="3">
    <location>
        <begin position="1"/>
        <end position="33"/>
    </location>
</feature>
<feature type="compositionally biased region" description="Polar residues" evidence="3">
    <location>
        <begin position="1"/>
        <end position="17"/>
    </location>
</feature>
<feature type="binding site" evidence="1">
    <location>
        <begin position="160"/>
        <end position="163"/>
    </location>
    <ligand>
        <name>GTP</name>
        <dbReference type="ChEBI" id="CHEBI:37565"/>
    </ligand>
</feature>
<feature type="binding site" evidence="1">
    <location>
        <begin position="214"/>
        <end position="222"/>
    </location>
    <ligand>
        <name>GTP</name>
        <dbReference type="ChEBI" id="CHEBI:37565"/>
    </ligand>
</feature>
<feature type="binding site" evidence="1">
    <location>
        <position position="297"/>
    </location>
    <ligand>
        <name>Zn(2+)</name>
        <dbReference type="ChEBI" id="CHEBI:29105"/>
    </ligand>
</feature>
<feature type="binding site" evidence="1">
    <location>
        <position position="302"/>
    </location>
    <ligand>
        <name>Zn(2+)</name>
        <dbReference type="ChEBI" id="CHEBI:29105"/>
    </ligand>
</feature>
<feature type="binding site" evidence="1">
    <location>
        <position position="304"/>
    </location>
    <ligand>
        <name>Zn(2+)</name>
        <dbReference type="ChEBI" id="CHEBI:29105"/>
    </ligand>
</feature>
<feature type="binding site" evidence="1">
    <location>
        <position position="310"/>
    </location>
    <ligand>
        <name>Zn(2+)</name>
        <dbReference type="ChEBI" id="CHEBI:29105"/>
    </ligand>
</feature>
<gene>
    <name evidence="1" type="primary">rsgA</name>
    <name type="ordered locus">ECIAI39_4626</name>
</gene>
<protein>
    <recommendedName>
        <fullName evidence="1">Small ribosomal subunit biogenesis GTPase RsgA</fullName>
        <ecNumber evidence="1">3.6.1.-</ecNumber>
    </recommendedName>
</protein>
<proteinExistence type="inferred from homology"/>
<accession>B7NTM0</accession>
<evidence type="ECO:0000255" key="1">
    <source>
        <dbReference type="HAMAP-Rule" id="MF_01820"/>
    </source>
</evidence>
<evidence type="ECO:0000255" key="2">
    <source>
        <dbReference type="PROSITE-ProRule" id="PRU01058"/>
    </source>
</evidence>
<evidence type="ECO:0000256" key="3">
    <source>
        <dbReference type="SAM" id="MobiDB-lite"/>
    </source>
</evidence>
<reference key="1">
    <citation type="journal article" date="2009" name="PLoS Genet.">
        <title>Organised genome dynamics in the Escherichia coli species results in highly diverse adaptive paths.</title>
        <authorList>
            <person name="Touchon M."/>
            <person name="Hoede C."/>
            <person name="Tenaillon O."/>
            <person name="Barbe V."/>
            <person name="Baeriswyl S."/>
            <person name="Bidet P."/>
            <person name="Bingen E."/>
            <person name="Bonacorsi S."/>
            <person name="Bouchier C."/>
            <person name="Bouvet O."/>
            <person name="Calteau A."/>
            <person name="Chiapello H."/>
            <person name="Clermont O."/>
            <person name="Cruveiller S."/>
            <person name="Danchin A."/>
            <person name="Diard M."/>
            <person name="Dossat C."/>
            <person name="Karoui M.E."/>
            <person name="Frapy E."/>
            <person name="Garry L."/>
            <person name="Ghigo J.M."/>
            <person name="Gilles A.M."/>
            <person name="Johnson J."/>
            <person name="Le Bouguenec C."/>
            <person name="Lescat M."/>
            <person name="Mangenot S."/>
            <person name="Martinez-Jehanne V."/>
            <person name="Matic I."/>
            <person name="Nassif X."/>
            <person name="Oztas S."/>
            <person name="Petit M.A."/>
            <person name="Pichon C."/>
            <person name="Rouy Z."/>
            <person name="Ruf C.S."/>
            <person name="Schneider D."/>
            <person name="Tourret J."/>
            <person name="Vacherie B."/>
            <person name="Vallenet D."/>
            <person name="Medigue C."/>
            <person name="Rocha E.P.C."/>
            <person name="Denamur E."/>
        </authorList>
    </citation>
    <scope>NUCLEOTIDE SEQUENCE [LARGE SCALE GENOMIC DNA]</scope>
    <source>
        <strain>IAI39 / ExPEC</strain>
    </source>
</reference>
<sequence>MSKNKLSKGQQRRVNANHQRRLKTSKEKPDYDDNLFGEPDEGIVISRFGMHADVESADGDVHRCNIRRTIRSLVTGDRVVWRPGKPAAEGVNVKGIVEAVHERTSVLTRPDFYDGVKPIAANIDQIVIVSAILPELSLNIIDRYLVACETLQIEPIIVLNKIDLLDDEGMEFVNEQMDIYRNIGYRVLMVSSHTQDGLKPLEEALTGRISIFAGQSGVGKSSLLNALLGLQKEILTNDVSDNSGLGQHTTTAARLYHFPHGGDVIDSPGVREFGLWHLEPEQITQGFVEFHDYLGLCKYRDCKHDTDPGCAIREAVEEGKIAETRFENYHRILESMAQVKTRKNFSDTDD</sequence>
<organism>
    <name type="scientific">Escherichia coli O7:K1 (strain IAI39 / ExPEC)</name>
    <dbReference type="NCBI Taxonomy" id="585057"/>
    <lineage>
        <taxon>Bacteria</taxon>
        <taxon>Pseudomonadati</taxon>
        <taxon>Pseudomonadota</taxon>
        <taxon>Gammaproteobacteria</taxon>
        <taxon>Enterobacterales</taxon>
        <taxon>Enterobacteriaceae</taxon>
        <taxon>Escherichia</taxon>
    </lineage>
</organism>
<name>RSGA_ECO7I</name>
<keyword id="KW-0963">Cytoplasm</keyword>
<keyword id="KW-0342">GTP-binding</keyword>
<keyword id="KW-0378">Hydrolase</keyword>
<keyword id="KW-0479">Metal-binding</keyword>
<keyword id="KW-0547">Nucleotide-binding</keyword>
<keyword id="KW-0690">Ribosome biogenesis</keyword>
<keyword id="KW-0694">RNA-binding</keyword>
<keyword id="KW-0699">rRNA-binding</keyword>
<keyword id="KW-0862">Zinc</keyword>
<dbReference type="EC" id="3.6.1.-" evidence="1"/>
<dbReference type="EMBL" id="CU928164">
    <property type="protein sequence ID" value="CAR20726.1"/>
    <property type="molecule type" value="Genomic_DNA"/>
</dbReference>
<dbReference type="RefSeq" id="WP_000041976.1">
    <property type="nucleotide sequence ID" value="NC_011750.1"/>
</dbReference>
<dbReference type="RefSeq" id="YP_002410490.1">
    <property type="nucleotide sequence ID" value="NC_011750.1"/>
</dbReference>
<dbReference type="SMR" id="B7NTM0"/>
<dbReference type="STRING" id="585057.ECIAI39_4626"/>
<dbReference type="KEGG" id="ect:ECIAI39_4626"/>
<dbReference type="PATRIC" id="fig|585057.6.peg.4775"/>
<dbReference type="HOGENOM" id="CLU_033617_2_0_6"/>
<dbReference type="Proteomes" id="UP000000749">
    <property type="component" value="Chromosome"/>
</dbReference>
<dbReference type="GO" id="GO:0005737">
    <property type="term" value="C:cytoplasm"/>
    <property type="evidence" value="ECO:0007669"/>
    <property type="project" value="UniProtKB-SubCell"/>
</dbReference>
<dbReference type="GO" id="GO:0005525">
    <property type="term" value="F:GTP binding"/>
    <property type="evidence" value="ECO:0007669"/>
    <property type="project" value="UniProtKB-UniRule"/>
</dbReference>
<dbReference type="GO" id="GO:0003924">
    <property type="term" value="F:GTPase activity"/>
    <property type="evidence" value="ECO:0007669"/>
    <property type="project" value="UniProtKB-UniRule"/>
</dbReference>
<dbReference type="GO" id="GO:0046872">
    <property type="term" value="F:metal ion binding"/>
    <property type="evidence" value="ECO:0007669"/>
    <property type="project" value="UniProtKB-KW"/>
</dbReference>
<dbReference type="GO" id="GO:0019843">
    <property type="term" value="F:rRNA binding"/>
    <property type="evidence" value="ECO:0007669"/>
    <property type="project" value="UniProtKB-KW"/>
</dbReference>
<dbReference type="GO" id="GO:0042274">
    <property type="term" value="P:ribosomal small subunit biogenesis"/>
    <property type="evidence" value="ECO:0007669"/>
    <property type="project" value="UniProtKB-UniRule"/>
</dbReference>
<dbReference type="CDD" id="cd01854">
    <property type="entry name" value="YjeQ_EngC"/>
    <property type="match status" value="1"/>
</dbReference>
<dbReference type="FunFam" id="1.10.40.50:FF:000001">
    <property type="entry name" value="Small ribosomal subunit biogenesis GTPase RsgA"/>
    <property type="match status" value="1"/>
</dbReference>
<dbReference type="FunFam" id="2.40.50.140:FF:000122">
    <property type="entry name" value="Small ribosomal subunit biogenesis GTPase RsgA"/>
    <property type="match status" value="1"/>
</dbReference>
<dbReference type="FunFam" id="3.40.50.300:FF:000389">
    <property type="entry name" value="Small ribosomal subunit biogenesis GTPase RsgA"/>
    <property type="match status" value="1"/>
</dbReference>
<dbReference type="Gene3D" id="2.40.50.140">
    <property type="entry name" value="Nucleic acid-binding proteins"/>
    <property type="match status" value="1"/>
</dbReference>
<dbReference type="Gene3D" id="3.40.50.300">
    <property type="entry name" value="P-loop containing nucleotide triphosphate hydrolases"/>
    <property type="match status" value="1"/>
</dbReference>
<dbReference type="Gene3D" id="1.10.40.50">
    <property type="entry name" value="Probable gtpase engc, domain 3"/>
    <property type="match status" value="1"/>
</dbReference>
<dbReference type="HAMAP" id="MF_01820">
    <property type="entry name" value="GTPase_RsgA"/>
    <property type="match status" value="1"/>
</dbReference>
<dbReference type="InterPro" id="IPR030378">
    <property type="entry name" value="G_CP_dom"/>
</dbReference>
<dbReference type="InterPro" id="IPR012340">
    <property type="entry name" value="NA-bd_OB-fold"/>
</dbReference>
<dbReference type="InterPro" id="IPR027417">
    <property type="entry name" value="P-loop_NTPase"/>
</dbReference>
<dbReference type="InterPro" id="IPR004881">
    <property type="entry name" value="Ribosome_biogen_GTPase_RsgA"/>
</dbReference>
<dbReference type="InterPro" id="IPR010914">
    <property type="entry name" value="RsgA_GTPase_dom"/>
</dbReference>
<dbReference type="NCBIfam" id="NF008931">
    <property type="entry name" value="PRK12288.1"/>
    <property type="match status" value="1"/>
</dbReference>
<dbReference type="NCBIfam" id="TIGR00157">
    <property type="entry name" value="ribosome small subunit-dependent GTPase A"/>
    <property type="match status" value="1"/>
</dbReference>
<dbReference type="PANTHER" id="PTHR32120">
    <property type="entry name" value="SMALL RIBOSOMAL SUBUNIT BIOGENESIS GTPASE RSGA"/>
    <property type="match status" value="1"/>
</dbReference>
<dbReference type="PANTHER" id="PTHR32120:SF11">
    <property type="entry name" value="SMALL RIBOSOMAL SUBUNIT BIOGENESIS GTPASE RSGA 1, MITOCHONDRIAL-RELATED"/>
    <property type="match status" value="1"/>
</dbReference>
<dbReference type="Pfam" id="PF03193">
    <property type="entry name" value="RsgA_GTPase"/>
    <property type="match status" value="1"/>
</dbReference>
<dbReference type="SUPFAM" id="SSF52540">
    <property type="entry name" value="P-loop containing nucleoside triphosphate hydrolases"/>
    <property type="match status" value="1"/>
</dbReference>
<dbReference type="PROSITE" id="PS50936">
    <property type="entry name" value="ENGC_GTPASE"/>
    <property type="match status" value="1"/>
</dbReference>
<dbReference type="PROSITE" id="PS51721">
    <property type="entry name" value="G_CP"/>
    <property type="match status" value="1"/>
</dbReference>
<comment type="function">
    <text evidence="1">One of several proteins that assist in the late maturation steps of the functional core of the 30S ribosomal subunit. Helps release RbfA from mature subunits. May play a role in the assembly of ribosomal proteins into the subunit. Circularly permuted GTPase that catalyzes slow GTP hydrolysis, GTPase activity is stimulated by the 30S ribosomal subunit.</text>
</comment>
<comment type="cofactor">
    <cofactor evidence="1">
        <name>Zn(2+)</name>
        <dbReference type="ChEBI" id="CHEBI:29105"/>
    </cofactor>
    <text evidence="1">Binds 1 zinc ion per subunit.</text>
</comment>
<comment type="subunit">
    <text evidence="1">Monomer. Associates with 30S ribosomal subunit, binds 16S rRNA.</text>
</comment>
<comment type="subcellular location">
    <subcellularLocation>
        <location evidence="1">Cytoplasm</location>
    </subcellularLocation>
</comment>
<comment type="similarity">
    <text evidence="1">Belongs to the TRAFAC class YlqF/YawG GTPase family. RsgA subfamily.</text>
</comment>